<organism>
    <name type="scientific">Mus musculus</name>
    <name type="common">Mouse</name>
    <dbReference type="NCBI Taxonomy" id="10090"/>
    <lineage>
        <taxon>Eukaryota</taxon>
        <taxon>Metazoa</taxon>
        <taxon>Chordata</taxon>
        <taxon>Craniata</taxon>
        <taxon>Vertebrata</taxon>
        <taxon>Euteleostomi</taxon>
        <taxon>Mammalia</taxon>
        <taxon>Eutheria</taxon>
        <taxon>Euarchontoglires</taxon>
        <taxon>Glires</taxon>
        <taxon>Rodentia</taxon>
        <taxon>Myomorpha</taxon>
        <taxon>Muroidea</taxon>
        <taxon>Muridae</taxon>
        <taxon>Murinae</taxon>
        <taxon>Mus</taxon>
        <taxon>Mus</taxon>
    </lineage>
</organism>
<sequence length="493" mass="55029">MASTVRPSFSLGNETLKVPLALFALNRQRLCERLRKNGAVQAASAVVLQGGEEMQRYCTDTSIIFRQESFFHWAFGVVESGCYGVIDVDTGKSTLFVPRLPDSYATWMGKIHSKEYFKEKYAVDDVQYTDEIASVLTSRNPSVLLTLRGVNTDSGSVCREASFEGISKFNVNNTILHPEIVECRVFKTDMELEVLRYTNRISSEAHREVMKAVKVGMKEYEMESLFQHYCYSRGGMRHTSYTCICCSGENAAVLHYGHAGAPNDRTIKDGDICLFDMGGEYYCFASDITCSFPANGKFTEDQKAIYEAVLRSCRTVMSTMKPGVWWPDMHRLADRIHLEELARIGLLSGSVDAMLQVHLGAVFMPHGLGHFLGLDVHDVGGYPEGVERIDEPGLRSLRTARHLEPGMVLTVEPGIYFIDHLLDQALADPAQACFFNQEVLQRFRNFGGVRIEEDVVVTDSGMELLTCVPRTVEEIEACMAGCDKASVPFSGQK</sequence>
<evidence type="ECO:0000250" key="1">
    <source>
        <dbReference type="UniProtKB" id="P12955"/>
    </source>
</evidence>
<evidence type="ECO:0000255" key="2"/>
<evidence type="ECO:0000305" key="3"/>
<protein>
    <recommendedName>
        <fullName>Xaa-Pro dipeptidase</fullName>
        <shortName>X-Pro dipeptidase</shortName>
        <ecNumber evidence="1">3.4.13.9</ecNumber>
    </recommendedName>
    <alternativeName>
        <fullName>Imidodipeptidase</fullName>
    </alternativeName>
    <alternativeName>
        <fullName>Peptidase 4</fullName>
    </alternativeName>
    <alternativeName>
        <fullName>Peptidase D</fullName>
    </alternativeName>
    <alternativeName>
        <fullName>Proline dipeptidase</fullName>
        <shortName>Prolidase</shortName>
    </alternativeName>
</protein>
<name>PEPD_MOUSE</name>
<gene>
    <name type="primary">Pepd</name>
    <name type="synonym">Pep4</name>
</gene>
<comment type="function">
    <text evidence="1">Dipeptidase that catalyzes the hydrolysis of dipeptides with a prolyl (Xaa-Pro) or hydroxyprolyl residue in the C-terminal position. The preferred dipeptide substrate is Gly-Pro, but other Xaa-Pro dipeptides, such as Ala-Pro, Met-Pro, Phe-Pro, Val-Pro and Leu-Pro, can be cleaved. Plays an important role in collagen metabolism because the high level of iminoacids in collagen.</text>
</comment>
<comment type="catalytic activity">
    <reaction evidence="1">
        <text>Xaa-L-Pro dipeptide + H2O = an L-alpha-amino acid + L-proline</text>
        <dbReference type="Rhea" id="RHEA:76407"/>
        <dbReference type="ChEBI" id="CHEBI:15377"/>
        <dbReference type="ChEBI" id="CHEBI:59869"/>
        <dbReference type="ChEBI" id="CHEBI:60039"/>
        <dbReference type="ChEBI" id="CHEBI:195196"/>
        <dbReference type="EC" id="3.4.13.9"/>
    </reaction>
</comment>
<comment type="cofactor">
    <cofactor evidence="1">
        <name>Mn(2+)</name>
        <dbReference type="ChEBI" id="CHEBI:29035"/>
    </cofactor>
    <text evidence="1">Binds 2 manganese ions per subunit.</text>
</comment>
<comment type="subunit">
    <text evidence="1">Homodimer.</text>
</comment>
<comment type="similarity">
    <text evidence="3">Belongs to the peptidase M24B family. Eukaryotic-type prolidase subfamily.</text>
</comment>
<keyword id="KW-0007">Acetylation</keyword>
<keyword id="KW-0177">Collagen degradation</keyword>
<keyword id="KW-0224">Dipeptidase</keyword>
<keyword id="KW-0378">Hydrolase</keyword>
<keyword id="KW-0464">Manganese</keyword>
<keyword id="KW-0479">Metal-binding</keyword>
<keyword id="KW-0482">Metalloprotease</keyword>
<keyword id="KW-0597">Phosphoprotein</keyword>
<keyword id="KW-0645">Protease</keyword>
<keyword id="KW-1185">Reference proteome</keyword>
<accession>Q11136</accession>
<accession>P97735</accession>
<accession>Q3TH86</accession>
<accession>Q9CWK4</accession>
<feature type="initiator methionine" description="Removed" evidence="2">
    <location>
        <position position="1"/>
    </location>
</feature>
<feature type="chain" id="PRO_0000185088" description="Xaa-Pro dipeptidase">
    <location>
        <begin position="2"/>
        <end position="493"/>
    </location>
</feature>
<feature type="binding site" evidence="1">
    <location>
        <position position="255"/>
    </location>
    <ligand>
        <name>a dipeptide</name>
        <dbReference type="ChEBI" id="CHEBI:90799"/>
    </ligand>
</feature>
<feature type="binding site" evidence="1">
    <location>
        <position position="276"/>
    </location>
    <ligand>
        <name>Mn(2+)</name>
        <dbReference type="ChEBI" id="CHEBI:29035"/>
        <label>1</label>
    </ligand>
</feature>
<feature type="binding site" evidence="1">
    <location>
        <position position="287"/>
    </location>
    <ligand>
        <name>a dipeptide</name>
        <dbReference type="ChEBI" id="CHEBI:90799"/>
    </ligand>
</feature>
<feature type="binding site" evidence="1">
    <location>
        <position position="287"/>
    </location>
    <ligand>
        <name>Mn(2+)</name>
        <dbReference type="ChEBI" id="CHEBI:29035"/>
        <label>1</label>
    </ligand>
</feature>
<feature type="binding site" evidence="1">
    <location>
        <position position="287"/>
    </location>
    <ligand>
        <name>Mn(2+)</name>
        <dbReference type="ChEBI" id="CHEBI:29035"/>
        <label>2</label>
    </ligand>
</feature>
<feature type="binding site" evidence="1">
    <location>
        <position position="370"/>
    </location>
    <ligand>
        <name>Mn(2+)</name>
        <dbReference type="ChEBI" id="CHEBI:29035"/>
        <label>2</label>
    </ligand>
</feature>
<feature type="binding site" evidence="1">
    <location>
        <position position="377"/>
    </location>
    <ligand>
        <name>a dipeptide</name>
        <dbReference type="ChEBI" id="CHEBI:90799"/>
    </ligand>
</feature>
<feature type="binding site" evidence="1">
    <location>
        <position position="398"/>
    </location>
    <ligand>
        <name>a dipeptide</name>
        <dbReference type="ChEBI" id="CHEBI:90799"/>
    </ligand>
</feature>
<feature type="binding site" evidence="1">
    <location>
        <position position="412"/>
    </location>
    <ligand>
        <name>Mn(2+)</name>
        <dbReference type="ChEBI" id="CHEBI:29035"/>
        <label>2</label>
    </ligand>
</feature>
<feature type="binding site" evidence="1">
    <location>
        <position position="452"/>
    </location>
    <ligand>
        <name>Mn(2+)</name>
        <dbReference type="ChEBI" id="CHEBI:29035"/>
        <label>1</label>
    </ligand>
</feature>
<feature type="binding site" evidence="1">
    <location>
        <position position="452"/>
    </location>
    <ligand>
        <name>Mn(2+)</name>
        <dbReference type="ChEBI" id="CHEBI:29035"/>
        <label>2</label>
    </ligand>
</feature>
<feature type="modified residue" description="N-acetylalanine" evidence="1 2">
    <location>
        <position position="2"/>
    </location>
</feature>
<feature type="modified residue" description="Phosphoserine" evidence="1">
    <location>
        <position position="167"/>
    </location>
</feature>
<feature type="sequence conflict" description="In Ref. 1; AAA92975." evidence="3" ref="1">
    <original>L</original>
    <variation>I</variation>
    <location>
        <position position="22"/>
    </location>
</feature>
<feature type="sequence conflict" description="In Ref. 1; AAA92975." evidence="3" ref="1">
    <original>G</original>
    <variation>R</variation>
    <location>
        <position position="296"/>
    </location>
</feature>
<feature type="sequence conflict" description="In Ref. 2; BAB11685." evidence="3" ref="2">
    <original>G</original>
    <variation>C</variation>
    <location>
        <position position="349"/>
    </location>
</feature>
<dbReference type="EC" id="3.4.13.9" evidence="1"/>
<dbReference type="EMBL" id="U51014">
    <property type="protein sequence ID" value="AAA92975.1"/>
    <property type="molecule type" value="mRNA"/>
</dbReference>
<dbReference type="EMBL" id="D82983">
    <property type="protein sequence ID" value="BAB11685.1"/>
    <property type="molecule type" value="mRNA"/>
</dbReference>
<dbReference type="EMBL" id="AK010581">
    <property type="protein sequence ID" value="BAB27043.1"/>
    <property type="molecule type" value="mRNA"/>
</dbReference>
<dbReference type="EMBL" id="AK145843">
    <property type="protein sequence ID" value="BAE26691.1"/>
    <property type="molecule type" value="mRNA"/>
</dbReference>
<dbReference type="EMBL" id="AK168384">
    <property type="protein sequence ID" value="BAE40312.1"/>
    <property type="molecule type" value="mRNA"/>
</dbReference>
<dbReference type="EMBL" id="BC086644">
    <property type="protein sequence ID" value="AAH86644.1"/>
    <property type="molecule type" value="mRNA"/>
</dbReference>
<dbReference type="CCDS" id="CCDS21143.1"/>
<dbReference type="RefSeq" id="NP_032846.2">
    <property type="nucleotide sequence ID" value="NM_008820.3"/>
</dbReference>
<dbReference type="SMR" id="Q11136"/>
<dbReference type="BioGRID" id="202110">
    <property type="interactions" value="18"/>
</dbReference>
<dbReference type="FunCoup" id="Q11136">
    <property type="interactions" value="1754"/>
</dbReference>
<dbReference type="STRING" id="10090.ENSMUSP00000075683"/>
<dbReference type="MEROPS" id="M24.007"/>
<dbReference type="GlyGen" id="Q11136">
    <property type="glycosylation" value="1 site, 1 O-linked glycan (1 site)"/>
</dbReference>
<dbReference type="iPTMnet" id="Q11136"/>
<dbReference type="PhosphoSitePlus" id="Q11136"/>
<dbReference type="SwissPalm" id="Q11136"/>
<dbReference type="jPOST" id="Q11136"/>
<dbReference type="PaxDb" id="10090-ENSMUSP00000075683"/>
<dbReference type="ProteomicsDB" id="288095"/>
<dbReference type="Pumba" id="Q11136"/>
<dbReference type="Antibodypedia" id="2792">
    <property type="antibodies" value="256 antibodies from 28 providers"/>
</dbReference>
<dbReference type="DNASU" id="18624"/>
<dbReference type="Ensembl" id="ENSMUST00000075068.14">
    <property type="protein sequence ID" value="ENSMUSP00000075683.8"/>
    <property type="gene ID" value="ENSMUSG00000063931.15"/>
</dbReference>
<dbReference type="GeneID" id="18624"/>
<dbReference type="KEGG" id="mmu:18624"/>
<dbReference type="UCSC" id="uc009gjj.2">
    <property type="organism name" value="mouse"/>
</dbReference>
<dbReference type="AGR" id="MGI:97542"/>
<dbReference type="CTD" id="5184"/>
<dbReference type="MGI" id="MGI:97542">
    <property type="gene designation" value="Pepd"/>
</dbReference>
<dbReference type="VEuPathDB" id="HostDB:ENSMUSG00000063931"/>
<dbReference type="eggNOG" id="KOG2737">
    <property type="taxonomic scope" value="Eukaryota"/>
</dbReference>
<dbReference type="GeneTree" id="ENSGT00940000153657"/>
<dbReference type="HOGENOM" id="CLU_017266_1_2_1"/>
<dbReference type="InParanoid" id="Q11136"/>
<dbReference type="OMA" id="DAHALFF"/>
<dbReference type="OrthoDB" id="10261878at2759"/>
<dbReference type="PhylomeDB" id="Q11136"/>
<dbReference type="TreeFam" id="TF313396"/>
<dbReference type="BioGRID-ORCS" id="18624">
    <property type="hits" value="4 hits in 77 CRISPR screens"/>
</dbReference>
<dbReference type="ChiTaRS" id="Pepd">
    <property type="organism name" value="mouse"/>
</dbReference>
<dbReference type="PRO" id="PR:Q11136"/>
<dbReference type="Proteomes" id="UP000000589">
    <property type="component" value="Chromosome 7"/>
</dbReference>
<dbReference type="RNAct" id="Q11136">
    <property type="molecule type" value="protein"/>
</dbReference>
<dbReference type="Bgee" id="ENSMUSG00000063931">
    <property type="expression patterns" value="Expressed in small intestine Peyer's patch and 270 other cell types or tissues"/>
</dbReference>
<dbReference type="ExpressionAtlas" id="Q11136">
    <property type="expression patterns" value="baseline and differential"/>
</dbReference>
<dbReference type="GO" id="GO:0030145">
    <property type="term" value="F:manganese ion binding"/>
    <property type="evidence" value="ECO:0007669"/>
    <property type="project" value="InterPro"/>
</dbReference>
<dbReference type="GO" id="GO:0070006">
    <property type="term" value="F:metalloaminopeptidase activity"/>
    <property type="evidence" value="ECO:0007669"/>
    <property type="project" value="InterPro"/>
</dbReference>
<dbReference type="GO" id="GO:0008233">
    <property type="term" value="F:peptidase activity"/>
    <property type="evidence" value="ECO:0000314"/>
    <property type="project" value="MGI"/>
</dbReference>
<dbReference type="GO" id="GO:0102009">
    <property type="term" value="F:proline dipeptidase activity"/>
    <property type="evidence" value="ECO:0000250"/>
    <property type="project" value="UniProtKB"/>
</dbReference>
<dbReference type="GO" id="GO:0030574">
    <property type="term" value="P:collagen catabolic process"/>
    <property type="evidence" value="ECO:0007669"/>
    <property type="project" value="UniProtKB-KW"/>
</dbReference>
<dbReference type="GO" id="GO:0043069">
    <property type="term" value="P:negative regulation of programmed cell death"/>
    <property type="evidence" value="ECO:0000250"/>
    <property type="project" value="UniProtKB"/>
</dbReference>
<dbReference type="GO" id="GO:0006508">
    <property type="term" value="P:proteolysis"/>
    <property type="evidence" value="ECO:0000250"/>
    <property type="project" value="UniProtKB"/>
</dbReference>
<dbReference type="CDD" id="cd01087">
    <property type="entry name" value="Prolidase"/>
    <property type="match status" value="1"/>
</dbReference>
<dbReference type="FunFam" id="3.90.230.10:FF:000002">
    <property type="entry name" value="Xaa-Pro aminopeptidase 3"/>
    <property type="match status" value="1"/>
</dbReference>
<dbReference type="FunFam" id="3.40.350.10:FF:000007">
    <property type="entry name" value="Xaa-Pro dipeptidase"/>
    <property type="match status" value="1"/>
</dbReference>
<dbReference type="Gene3D" id="3.90.230.10">
    <property type="entry name" value="Creatinase/methionine aminopeptidase superfamily"/>
    <property type="match status" value="1"/>
</dbReference>
<dbReference type="Gene3D" id="3.40.350.10">
    <property type="entry name" value="Creatinase/prolidase N-terminal domain"/>
    <property type="match status" value="1"/>
</dbReference>
<dbReference type="InterPro" id="IPR007865">
    <property type="entry name" value="Aminopep_P_N"/>
</dbReference>
<dbReference type="InterPro" id="IPR029149">
    <property type="entry name" value="Creatin/AminoP/Spt16_N"/>
</dbReference>
<dbReference type="InterPro" id="IPR036005">
    <property type="entry name" value="Creatinase/aminopeptidase-like"/>
</dbReference>
<dbReference type="InterPro" id="IPR000994">
    <property type="entry name" value="Pept_M24"/>
</dbReference>
<dbReference type="InterPro" id="IPR001131">
    <property type="entry name" value="Peptidase_M24B_aminopep-P_CS"/>
</dbReference>
<dbReference type="InterPro" id="IPR052433">
    <property type="entry name" value="X-Pro_dipept-like"/>
</dbReference>
<dbReference type="PANTHER" id="PTHR48480">
    <property type="match status" value="1"/>
</dbReference>
<dbReference type="PANTHER" id="PTHR48480:SF2">
    <property type="entry name" value="PEPTIDASE D"/>
    <property type="match status" value="1"/>
</dbReference>
<dbReference type="Pfam" id="PF05195">
    <property type="entry name" value="AMP_N"/>
    <property type="match status" value="1"/>
</dbReference>
<dbReference type="Pfam" id="PF00557">
    <property type="entry name" value="Peptidase_M24"/>
    <property type="match status" value="1"/>
</dbReference>
<dbReference type="SMART" id="SM01011">
    <property type="entry name" value="AMP_N"/>
    <property type="match status" value="1"/>
</dbReference>
<dbReference type="SUPFAM" id="SSF55920">
    <property type="entry name" value="Creatinase/aminopeptidase"/>
    <property type="match status" value="1"/>
</dbReference>
<dbReference type="SUPFAM" id="SSF53092">
    <property type="entry name" value="Creatinase/prolidase N-terminal domain"/>
    <property type="match status" value="1"/>
</dbReference>
<dbReference type="PROSITE" id="PS00491">
    <property type="entry name" value="PROLINE_PEPTIDASE"/>
    <property type="match status" value="1"/>
</dbReference>
<reference key="1">
    <citation type="submission" date="1996-03" db="EMBL/GenBank/DDBJ databases">
        <authorList>
            <person name="Ledoux P."/>
            <person name="Savoie P."/>
            <person name="Scriver C."/>
            <person name="Hechtman P."/>
        </authorList>
    </citation>
    <scope>NUCLEOTIDE SEQUENCE [MRNA]</scope>
    <source>
        <strain>C57BL/6J</strain>
        <tissue>Kidney</tissue>
    </source>
</reference>
<reference key="2">
    <citation type="journal article" date="1996" name="Biochim. Biophys. Acta">
        <title>Cloning of mouse prolidase cDNA: predominant expression of prolidase mRNA in kidney.</title>
        <authorList>
            <person name="Ishii T."/>
            <person name="Tsujino S."/>
            <person name="Matsunobu S."/>
            <person name="Endo F."/>
            <person name="Sato K."/>
            <person name="Sakuragawa N."/>
        </authorList>
    </citation>
    <scope>NUCLEOTIDE SEQUENCE [MRNA]</scope>
    <source>
        <tissue>Liver</tissue>
    </source>
</reference>
<reference key="3">
    <citation type="journal article" date="2005" name="Science">
        <title>The transcriptional landscape of the mammalian genome.</title>
        <authorList>
            <person name="Carninci P."/>
            <person name="Kasukawa T."/>
            <person name="Katayama S."/>
            <person name="Gough J."/>
            <person name="Frith M.C."/>
            <person name="Maeda N."/>
            <person name="Oyama R."/>
            <person name="Ravasi T."/>
            <person name="Lenhard B."/>
            <person name="Wells C."/>
            <person name="Kodzius R."/>
            <person name="Shimokawa K."/>
            <person name="Bajic V.B."/>
            <person name="Brenner S.E."/>
            <person name="Batalov S."/>
            <person name="Forrest A.R."/>
            <person name="Zavolan M."/>
            <person name="Davis M.J."/>
            <person name="Wilming L.G."/>
            <person name="Aidinis V."/>
            <person name="Allen J.E."/>
            <person name="Ambesi-Impiombato A."/>
            <person name="Apweiler R."/>
            <person name="Aturaliya R.N."/>
            <person name="Bailey T.L."/>
            <person name="Bansal M."/>
            <person name="Baxter L."/>
            <person name="Beisel K.W."/>
            <person name="Bersano T."/>
            <person name="Bono H."/>
            <person name="Chalk A.M."/>
            <person name="Chiu K.P."/>
            <person name="Choudhary V."/>
            <person name="Christoffels A."/>
            <person name="Clutterbuck D.R."/>
            <person name="Crowe M.L."/>
            <person name="Dalla E."/>
            <person name="Dalrymple B.P."/>
            <person name="de Bono B."/>
            <person name="Della Gatta G."/>
            <person name="di Bernardo D."/>
            <person name="Down T."/>
            <person name="Engstrom P."/>
            <person name="Fagiolini M."/>
            <person name="Faulkner G."/>
            <person name="Fletcher C.F."/>
            <person name="Fukushima T."/>
            <person name="Furuno M."/>
            <person name="Futaki S."/>
            <person name="Gariboldi M."/>
            <person name="Georgii-Hemming P."/>
            <person name="Gingeras T.R."/>
            <person name="Gojobori T."/>
            <person name="Green R.E."/>
            <person name="Gustincich S."/>
            <person name="Harbers M."/>
            <person name="Hayashi Y."/>
            <person name="Hensch T.K."/>
            <person name="Hirokawa N."/>
            <person name="Hill D."/>
            <person name="Huminiecki L."/>
            <person name="Iacono M."/>
            <person name="Ikeo K."/>
            <person name="Iwama A."/>
            <person name="Ishikawa T."/>
            <person name="Jakt M."/>
            <person name="Kanapin A."/>
            <person name="Katoh M."/>
            <person name="Kawasawa Y."/>
            <person name="Kelso J."/>
            <person name="Kitamura H."/>
            <person name="Kitano H."/>
            <person name="Kollias G."/>
            <person name="Krishnan S.P."/>
            <person name="Kruger A."/>
            <person name="Kummerfeld S.K."/>
            <person name="Kurochkin I.V."/>
            <person name="Lareau L.F."/>
            <person name="Lazarevic D."/>
            <person name="Lipovich L."/>
            <person name="Liu J."/>
            <person name="Liuni S."/>
            <person name="McWilliam S."/>
            <person name="Madan Babu M."/>
            <person name="Madera M."/>
            <person name="Marchionni L."/>
            <person name="Matsuda H."/>
            <person name="Matsuzawa S."/>
            <person name="Miki H."/>
            <person name="Mignone F."/>
            <person name="Miyake S."/>
            <person name="Morris K."/>
            <person name="Mottagui-Tabar S."/>
            <person name="Mulder N."/>
            <person name="Nakano N."/>
            <person name="Nakauchi H."/>
            <person name="Ng P."/>
            <person name="Nilsson R."/>
            <person name="Nishiguchi S."/>
            <person name="Nishikawa S."/>
            <person name="Nori F."/>
            <person name="Ohara O."/>
            <person name="Okazaki Y."/>
            <person name="Orlando V."/>
            <person name="Pang K.C."/>
            <person name="Pavan W.J."/>
            <person name="Pavesi G."/>
            <person name="Pesole G."/>
            <person name="Petrovsky N."/>
            <person name="Piazza S."/>
            <person name="Reed J."/>
            <person name="Reid J.F."/>
            <person name="Ring B.Z."/>
            <person name="Ringwald M."/>
            <person name="Rost B."/>
            <person name="Ruan Y."/>
            <person name="Salzberg S.L."/>
            <person name="Sandelin A."/>
            <person name="Schneider C."/>
            <person name="Schoenbach C."/>
            <person name="Sekiguchi K."/>
            <person name="Semple C.A."/>
            <person name="Seno S."/>
            <person name="Sessa L."/>
            <person name="Sheng Y."/>
            <person name="Shibata Y."/>
            <person name="Shimada H."/>
            <person name="Shimada K."/>
            <person name="Silva D."/>
            <person name="Sinclair B."/>
            <person name="Sperling S."/>
            <person name="Stupka E."/>
            <person name="Sugiura K."/>
            <person name="Sultana R."/>
            <person name="Takenaka Y."/>
            <person name="Taki K."/>
            <person name="Tammoja K."/>
            <person name="Tan S.L."/>
            <person name="Tang S."/>
            <person name="Taylor M.S."/>
            <person name="Tegner J."/>
            <person name="Teichmann S.A."/>
            <person name="Ueda H.R."/>
            <person name="van Nimwegen E."/>
            <person name="Verardo R."/>
            <person name="Wei C.L."/>
            <person name="Yagi K."/>
            <person name="Yamanishi H."/>
            <person name="Zabarovsky E."/>
            <person name="Zhu S."/>
            <person name="Zimmer A."/>
            <person name="Hide W."/>
            <person name="Bult C."/>
            <person name="Grimmond S.M."/>
            <person name="Teasdale R.D."/>
            <person name="Liu E.T."/>
            <person name="Brusic V."/>
            <person name="Quackenbush J."/>
            <person name="Wahlestedt C."/>
            <person name="Mattick J.S."/>
            <person name="Hume D.A."/>
            <person name="Kai C."/>
            <person name="Sasaki D."/>
            <person name="Tomaru Y."/>
            <person name="Fukuda S."/>
            <person name="Kanamori-Katayama M."/>
            <person name="Suzuki M."/>
            <person name="Aoki J."/>
            <person name="Arakawa T."/>
            <person name="Iida J."/>
            <person name="Imamura K."/>
            <person name="Itoh M."/>
            <person name="Kato T."/>
            <person name="Kawaji H."/>
            <person name="Kawagashira N."/>
            <person name="Kawashima T."/>
            <person name="Kojima M."/>
            <person name="Kondo S."/>
            <person name="Konno H."/>
            <person name="Nakano K."/>
            <person name="Ninomiya N."/>
            <person name="Nishio T."/>
            <person name="Okada M."/>
            <person name="Plessy C."/>
            <person name="Shibata K."/>
            <person name="Shiraki T."/>
            <person name="Suzuki S."/>
            <person name="Tagami M."/>
            <person name="Waki K."/>
            <person name="Watahiki A."/>
            <person name="Okamura-Oho Y."/>
            <person name="Suzuki H."/>
            <person name="Kawai J."/>
            <person name="Hayashizaki Y."/>
        </authorList>
    </citation>
    <scope>NUCLEOTIDE SEQUENCE [LARGE SCALE MRNA]</scope>
    <source>
        <strain>C57BL/6J</strain>
        <tissue>Amnion</tissue>
        <tissue>Embryonic stem cell</tissue>
        <tissue>Liver</tissue>
    </source>
</reference>
<reference key="4">
    <citation type="journal article" date="2004" name="Genome Res.">
        <title>The status, quality, and expansion of the NIH full-length cDNA project: the Mammalian Gene Collection (MGC).</title>
        <authorList>
            <consortium name="The MGC Project Team"/>
        </authorList>
    </citation>
    <scope>NUCLEOTIDE SEQUENCE [LARGE SCALE MRNA]</scope>
    <source>
        <strain>C57BL/6J</strain>
        <tissue>Brain</tissue>
    </source>
</reference>
<reference key="5">
    <citation type="journal article" date="2010" name="Cell">
        <title>A tissue-specific atlas of mouse protein phosphorylation and expression.</title>
        <authorList>
            <person name="Huttlin E.L."/>
            <person name="Jedrychowski M.P."/>
            <person name="Elias J.E."/>
            <person name="Goswami T."/>
            <person name="Rad R."/>
            <person name="Beausoleil S.A."/>
            <person name="Villen J."/>
            <person name="Haas W."/>
            <person name="Sowa M.E."/>
            <person name="Gygi S.P."/>
        </authorList>
    </citation>
    <scope>IDENTIFICATION BY MASS SPECTROMETRY [LARGE SCALE ANALYSIS]</scope>
    <source>
        <tissue>Brain</tissue>
        <tissue>Brown adipose tissue</tissue>
        <tissue>Heart</tissue>
        <tissue>Kidney</tissue>
        <tissue>Liver</tissue>
        <tissue>Lung</tissue>
        <tissue>Pancreas</tissue>
        <tissue>Spleen</tissue>
        <tissue>Testis</tissue>
    </source>
</reference>
<proteinExistence type="evidence at protein level"/>